<accession>P59044</accession>
<accession>A8K9F3</accession>
<accession>E9PJZ8</accession>
<organism>
    <name type="scientific">Homo sapiens</name>
    <name type="common">Human</name>
    <dbReference type="NCBI Taxonomy" id="9606"/>
    <lineage>
        <taxon>Eukaryota</taxon>
        <taxon>Metazoa</taxon>
        <taxon>Chordata</taxon>
        <taxon>Craniata</taxon>
        <taxon>Vertebrata</taxon>
        <taxon>Euteleostomi</taxon>
        <taxon>Mammalia</taxon>
        <taxon>Eutheria</taxon>
        <taxon>Euarchontoglires</taxon>
        <taxon>Primates</taxon>
        <taxon>Haplorrhini</taxon>
        <taxon>Catarrhini</taxon>
        <taxon>Hominidae</taxon>
        <taxon>Homo</taxon>
    </lineage>
</organism>
<protein>
    <recommendedName>
        <fullName evidence="25">NACHT, LRR and PYD domains-containing protein 6</fullName>
    </recommendedName>
    <alternativeName>
        <fullName evidence="2">Angiotensin II/vasopressin receptor</fullName>
    </alternativeName>
    <alternativeName>
        <fullName evidence="21">PYRIN-containing APAF1-like protein 5</fullName>
    </alternativeName>
</protein>
<keyword id="KW-0002">3D-structure</keyword>
<keyword id="KW-0025">Alternative splicing</keyword>
<keyword id="KW-0067">ATP-binding</keyword>
<keyword id="KW-1003">Cell membrane</keyword>
<keyword id="KW-0963">Cytoplasm</keyword>
<keyword id="KW-0391">Immunity</keyword>
<keyword id="KW-1271">Inflammasome</keyword>
<keyword id="KW-0395">Inflammatory response</keyword>
<keyword id="KW-0399">Innate immunity</keyword>
<keyword id="KW-0433">Leucine-rich repeat</keyword>
<keyword id="KW-0472">Membrane</keyword>
<keyword id="KW-0547">Nucleotide-binding</keyword>
<keyword id="KW-0539">Nucleus</keyword>
<keyword id="KW-1267">Proteomics identification</keyword>
<keyword id="KW-1185">Reference proteome</keyword>
<keyword id="KW-0677">Repeat</keyword>
<keyword id="KW-0832">Ubl conjugation</keyword>
<proteinExistence type="evidence at protein level"/>
<gene>
    <name evidence="24 26" type="primary">NLRP6</name>
    <name evidence="22" type="synonym">NALP6</name>
    <name evidence="21" type="synonym">PYPAF5</name>
</gene>
<comment type="function">
    <text evidence="2 8 15 16 17 18 19 20">Acts as the sensor component of the NLRP6 inflammasome, which mediates inflammasome activation in response to various pathogen-associated signals, leading to maturation and secretion of IL1B and IL18 (PubMed:30392956, PubMed:34678144). Inflammasomes are supramolecular complexes that assemble in the cytosol in response to pathogens and other damage-associated signals and play critical roles in innate immunity and inflammation (PubMed:30674671). Acts as a recognition receptor (PRR): recognizes and binds specific pathogens and other damage-associated signals, such as lipoteichoic acid (LTA), a cell-wall component of Gram-positive bacteria, or double stranded RNA (dsRNA) (PubMed:30392956, PubMed:33377178, PubMed:34678144). May also recognize and bind lipopolysaccharide (LPS), a major component of the outer membrane of Gram-negative bacteria; however, LPS is probably not a major activator of the NLRP6 inflammasome (PubMed:31932628, PubMed:34678144). Following LTA- or dsRNA-binding, NLRP6 undergoes liquid-liquid phase separation (LLPS), enhancing multivalent interactions, an essential step for the formation of the NLRP6 inflammasome polymeric complex (PubMed:34678144). The NLRP6 inflammasome acts by promoting recruitment of effector pro-inflammatory caspases (CASP1 and/or CASP4) that catalyze maturation and secretion of IL1B and IL18 in the extracellular milieu (PubMed:12387869, PubMed:30392956, PubMed:30674671, PubMed:34678144). The NLRP6 inflammasome plays a central role in the maintenance of epithelial integrity and host defense against microbial infections in the intestine (PubMed:30392956). Required to restrict infection against Gram-positive bacteria by recognizing lipoteichoic acid (LTA), leading to recruitment of CASP4 and CASP1, and subsequent maturation and secretion of IL1B and IL18 (PubMed:30392956, PubMed:33377178). Involved in intestinal antiviral innate immunity together with DHX15: recognizes and binds viral dsRNA to restrict infection by enteric viruses through the interferon pathway and GSDMD-dependent release of IL18 (PubMed:34161762, PubMed:34678144). Required to prevent infection by the apicomplexan parasite Cryptosporidium in enterocytes by promoting GSDMD-dependent release of IL18 (By similarity). The NLRP6 inflammasome may also regulate the gut microbiota composition by acting as a sensor of microbiota-associated metabolites to form a PYCARD/ASC-dependent inflammasome for downstream IL18 release and secretion of antimicrobial peptides (By similarity). Essential for gut mucosal self-renewal and proliferation (By similarity). Regulate mucus secretion in an inflammasome- and autophagy-dependent manner to prevent invasion by enteric bacteria, (By similarity). During systemic bacterial infections, the NLRP6 inflammasome negatively regulates neutrophil recruitment and neutrophil extracellular traps (NETs) formation (By similarity). May promote peripheral nerve recovery following injury via an inflammasome-independent mechanism (By similarity).</text>
</comment>
<comment type="subunit">
    <text evidence="16 17 19 20">Homomultimer; forms the NLRP6 inflammasome polymeric complex, a filament composed of homopolymers in response to pathogens and other damage-associated signals (PubMed:30674671, PubMed:31932628, PubMed:34678144). The core of NLRP6 inflammasomes consists of a signal sensor component (NLRP6), an adapter (PYCARD/ASC), which recruits effector pro-inflammatory caspases (CASP1 and CASP4) (PubMed:30674671, PubMed:34678144). Interacts (via pyrin domain) with PYCARD/ASC (via pyrin domain); interaction takes place following NLRP6 activation and formation of liquid-liquid phase separation (LLPS), initiating nucleation which greatly enhances further addition of soluble PYCARD/ASC molecules to the speck in a prion-like polymerization process (PubMed:30674671, PubMed:34678144). Clustered PYCARD/ASC nucleates the formation of CASP1 (or possibly CASP4) filaments through the interaction of their respective CARD domains, acting as a platform for CASP1 polymerization (PubMed:34678144). CASP1 filament formation increases local enzyme concentration, resulting in trans-autocleavage and activation (PubMed:34678144). Active CASP1 then processes IL1B and IL18 precursors, leading to the release of mature cytokines in the extracellular milieu and inflammatory response (PubMed:34678144). Interacts with DHX15 (PubMed:34161762).</text>
</comment>
<comment type="subcellular location">
    <subcellularLocation>
        <location evidence="8 17">Cytoplasm</location>
        <location evidence="8 17">Cytosol</location>
    </subcellularLocation>
    <subcellularLocation>
        <location evidence="8 16 17 20">Inflammasome</location>
    </subcellularLocation>
    <subcellularLocation>
        <location evidence="1">Cell membrane</location>
    </subcellularLocation>
    <subcellularLocation>
        <location evidence="1">Nucleus membrane</location>
    </subcellularLocation>
</comment>
<comment type="alternative products">
    <event type="alternative splicing"/>
    <isoform>
        <id>P59044-1</id>
        <name>1</name>
        <sequence type="displayed"/>
    </isoform>
    <isoform>
        <id>P59044-2</id>
        <name>2</name>
        <sequence type="described" ref="VSP_054400"/>
    </isoform>
</comment>
<comment type="tissue specificity">
    <text evidence="8 12">Expressed in peripheral blood leukocytes, predominantly in granulocytes and, at lower levels, in CD4(+) and CD8(+) T-cells (PubMed:12387869). Expressed in colonic myofibroblasts (at protein level) (PubMed:21593405).</text>
</comment>
<comment type="induction">
    <text evidence="11 13">Up-regulated by rosiglitazone, a PPARG agonist, in Caco2 and HCT116 colorectal carcinoma cells (PubMed:21088234, PubMed:23470617). Down-regulated by CRH (at protein level) (PubMed:23470617).</text>
</comment>
<comment type="domain">
    <text evidence="20">The poly-Lys disordered region (352-356) mediates the formation of liquid-liquid phase separation (LLPS), an essential step for nucleation and formation of the NLRP6 inflammasome complex.</text>
</comment>
<comment type="PTM">
    <text evidence="2">Polyubiquitinated with 'Lys-63'-linked chains, promoting the interaction with PYCARD/ASC and formation of the NLRP6 inflammasome. Deubiquitination by CYLD decreases the interaction with PYCARD/ASC.</text>
</comment>
<comment type="similarity">
    <text evidence="25">Belongs to the NLRP family.</text>
</comment>
<evidence type="ECO:0000250" key="1">
    <source>
        <dbReference type="UniProtKB" id="Q63035"/>
    </source>
</evidence>
<evidence type="ECO:0000250" key="2">
    <source>
        <dbReference type="UniProtKB" id="Q91WS2"/>
    </source>
</evidence>
<evidence type="ECO:0000255" key="3"/>
<evidence type="ECO:0000255" key="4">
    <source>
        <dbReference type="PROSITE-ProRule" id="PRU00061"/>
    </source>
</evidence>
<evidence type="ECO:0000255" key="5">
    <source>
        <dbReference type="PROSITE-ProRule" id="PRU00136"/>
    </source>
</evidence>
<evidence type="ECO:0000256" key="6">
    <source>
        <dbReference type="SAM" id="MobiDB-lite"/>
    </source>
</evidence>
<evidence type="ECO:0000269" key="7">
    <source>
    </source>
</evidence>
<evidence type="ECO:0000269" key="8">
    <source>
    </source>
</evidence>
<evidence type="ECO:0000269" key="9">
    <source>
    </source>
</evidence>
<evidence type="ECO:0000269" key="10">
    <source>
    </source>
</evidence>
<evidence type="ECO:0000269" key="11">
    <source>
    </source>
</evidence>
<evidence type="ECO:0000269" key="12">
    <source>
    </source>
</evidence>
<evidence type="ECO:0000269" key="13">
    <source>
    </source>
</evidence>
<evidence type="ECO:0000269" key="14">
    <source>
    </source>
</evidence>
<evidence type="ECO:0000269" key="15">
    <source>
    </source>
</evidence>
<evidence type="ECO:0000269" key="16">
    <source>
    </source>
</evidence>
<evidence type="ECO:0000269" key="17">
    <source>
    </source>
</evidence>
<evidence type="ECO:0000269" key="18">
    <source>
    </source>
</evidence>
<evidence type="ECO:0000269" key="19">
    <source>
    </source>
</evidence>
<evidence type="ECO:0000269" key="20">
    <source>
    </source>
</evidence>
<evidence type="ECO:0000303" key="21">
    <source>
    </source>
</evidence>
<evidence type="ECO:0000303" key="22">
    <source>
    </source>
</evidence>
<evidence type="ECO:0000303" key="23">
    <source>
    </source>
</evidence>
<evidence type="ECO:0000303" key="24">
    <source>
    </source>
</evidence>
<evidence type="ECO:0000305" key="25"/>
<evidence type="ECO:0000312" key="26">
    <source>
        <dbReference type="HGNC" id="HGNC:22944"/>
    </source>
</evidence>
<evidence type="ECO:0007744" key="27">
    <source>
        <dbReference type="PDB" id="6NCV"/>
    </source>
</evidence>
<evidence type="ECO:0007744" key="28">
    <source>
        <dbReference type="PDB" id="6NDJ"/>
    </source>
</evidence>
<evidence type="ECO:0007829" key="29">
    <source>
        <dbReference type="PDB" id="6NDJ"/>
    </source>
</evidence>
<name>NLRP6_HUMAN</name>
<sequence length="892" mass="98768">MDQPEAPCSSTGPRLAVARELLLAALEELSQEQLKRFRHKLRDVGPDGRSIPWGRLERADAVDLAEQLAQFYGPEPALEVARKTLKRADARDVAAQLQERRLQRLGLGSGTLLSVSEYKKKYREHVLQLHARVKERNARSVKITKRFTKLLIAPESAAPEEAMGPAEEPEPGRARRSDTHTFNRLFRRDEEGRRPLTVVLQGPAGIGKTMAAKKILYDWAAGKLYQGQVDFAFFMPCGELLERPGTRSLADLILDQCPDRGAPVPQMLAQPQRLLFILDGADELPALGGPEAAPCTDPFEAASGARVLGGLLSKALLPTALLLVTTRAAAPGRLQGRLCSPQCAEVRGFSDKDKKKYFYKYFRDERRAERAYRFVKENETLFALCFVPFVCWIVCTVLRQQLELGRDLSRTSKTTTSVYLLFITSVLSSAPVADGPRLQGDLRNLCRLAREGVLGRRAQFAEKELEQLELRGSKVQTLFLSKKELPGVLETEVTYQFIDQSFQEFLAALSYLLEDGGVPRTAAGGVGTLLRGDAQPHSHLVLTTRFLFGLLSAERMRDIERHFGCMVSERVKQEALRWVQGQGQGCPGVAPEVTEGAKGLEDTEEPEEEEEGEEPNYPLELLYCLYETQEDAFVRQALCRFPELALQRVRFCRMDVAVLSYCVRCCPAGQALRLISCRLVAAQEKKKKSLGKRLQASLGGGSSSQGTTKQLPASLLHPLFQAMTDPLCHLSSLTLSHCKLPDAVCRDLSEALRAAPALTELGLLHNRLSEAGLRMLSEGLAWPQCRVQTVRVQLPDPQRGLQYLVGMLRQSPALTTLDLSGCQLPAPMVTYLCAVLQHQGCGLQTLSLASVELSEQSLQELQAVKRAKPDLVITHPALDGHPQPPKELISTF</sequence>
<reference key="1">
    <citation type="journal article" date="2002" name="J. Biol. Chem.">
        <title>PYPAF7, a novel PYRIN-containing Apaf1-like protein that regulates activation of NF-kappa B and caspase-1-dependent cytokine processing.</title>
        <authorList>
            <person name="Wang L."/>
            <person name="Manji G.A."/>
            <person name="Grenier J.M."/>
            <person name="Al-Garawi A."/>
            <person name="Merriam S."/>
            <person name="Lora J.M."/>
            <person name="Geddes B.J."/>
            <person name="Briskin M."/>
            <person name="DiStefano P.S."/>
            <person name="Bertin J."/>
        </authorList>
    </citation>
    <scope>NUCLEOTIDE SEQUENCE [MRNA] (ISOFORM 1)</scope>
    <scope>VARIANTS LEU-163 AND PHE-361</scope>
</reference>
<reference key="2">
    <citation type="journal article" date="2003" name="Nat. Rev. Mol. Cell Biol.">
        <title>NALPs: a novel protein family involved in inflammation.</title>
        <authorList>
            <person name="Tschopp J."/>
            <person name="Martinon F."/>
            <person name="Burns K."/>
        </authorList>
    </citation>
    <scope>NUCLEOTIDE SEQUENCE [MRNA] (ISOFORM 1)</scope>
    <scope>VARIANTS LEU-163 AND PHE-361</scope>
</reference>
<reference key="3">
    <citation type="journal article" date="2004" name="Nat. Genet.">
        <title>Complete sequencing and characterization of 21,243 full-length human cDNAs.</title>
        <authorList>
            <person name="Ota T."/>
            <person name="Suzuki Y."/>
            <person name="Nishikawa T."/>
            <person name="Otsuki T."/>
            <person name="Sugiyama T."/>
            <person name="Irie R."/>
            <person name="Wakamatsu A."/>
            <person name="Hayashi K."/>
            <person name="Sato H."/>
            <person name="Nagai K."/>
            <person name="Kimura K."/>
            <person name="Makita H."/>
            <person name="Sekine M."/>
            <person name="Obayashi M."/>
            <person name="Nishi T."/>
            <person name="Shibahara T."/>
            <person name="Tanaka T."/>
            <person name="Ishii S."/>
            <person name="Yamamoto J."/>
            <person name="Saito K."/>
            <person name="Kawai Y."/>
            <person name="Isono Y."/>
            <person name="Nakamura Y."/>
            <person name="Nagahari K."/>
            <person name="Murakami K."/>
            <person name="Yasuda T."/>
            <person name="Iwayanagi T."/>
            <person name="Wagatsuma M."/>
            <person name="Shiratori A."/>
            <person name="Sudo H."/>
            <person name="Hosoiri T."/>
            <person name="Kaku Y."/>
            <person name="Kodaira H."/>
            <person name="Kondo H."/>
            <person name="Sugawara M."/>
            <person name="Takahashi M."/>
            <person name="Kanda K."/>
            <person name="Yokoi T."/>
            <person name="Furuya T."/>
            <person name="Kikkawa E."/>
            <person name="Omura Y."/>
            <person name="Abe K."/>
            <person name="Kamihara K."/>
            <person name="Katsuta N."/>
            <person name="Sato K."/>
            <person name="Tanikawa M."/>
            <person name="Yamazaki M."/>
            <person name="Ninomiya K."/>
            <person name="Ishibashi T."/>
            <person name="Yamashita H."/>
            <person name="Murakawa K."/>
            <person name="Fujimori K."/>
            <person name="Tanai H."/>
            <person name="Kimata M."/>
            <person name="Watanabe M."/>
            <person name="Hiraoka S."/>
            <person name="Chiba Y."/>
            <person name="Ishida S."/>
            <person name="Ono Y."/>
            <person name="Takiguchi S."/>
            <person name="Watanabe S."/>
            <person name="Yosida M."/>
            <person name="Hotuta T."/>
            <person name="Kusano J."/>
            <person name="Kanehori K."/>
            <person name="Takahashi-Fujii A."/>
            <person name="Hara H."/>
            <person name="Tanase T.-O."/>
            <person name="Nomura Y."/>
            <person name="Togiya S."/>
            <person name="Komai F."/>
            <person name="Hara R."/>
            <person name="Takeuchi K."/>
            <person name="Arita M."/>
            <person name="Imose N."/>
            <person name="Musashino K."/>
            <person name="Yuuki H."/>
            <person name="Oshima A."/>
            <person name="Sasaki N."/>
            <person name="Aotsuka S."/>
            <person name="Yoshikawa Y."/>
            <person name="Matsunawa H."/>
            <person name="Ichihara T."/>
            <person name="Shiohata N."/>
            <person name="Sano S."/>
            <person name="Moriya S."/>
            <person name="Momiyama H."/>
            <person name="Satoh N."/>
            <person name="Takami S."/>
            <person name="Terashima Y."/>
            <person name="Suzuki O."/>
            <person name="Nakagawa S."/>
            <person name="Senoh A."/>
            <person name="Mizoguchi H."/>
            <person name="Goto Y."/>
            <person name="Shimizu F."/>
            <person name="Wakebe H."/>
            <person name="Hishigaki H."/>
            <person name="Watanabe T."/>
            <person name="Sugiyama A."/>
            <person name="Takemoto M."/>
            <person name="Kawakami B."/>
            <person name="Yamazaki M."/>
            <person name="Watanabe K."/>
            <person name="Kumagai A."/>
            <person name="Itakura S."/>
            <person name="Fukuzumi Y."/>
            <person name="Fujimori Y."/>
            <person name="Komiyama M."/>
            <person name="Tashiro H."/>
            <person name="Tanigami A."/>
            <person name="Fujiwara T."/>
            <person name="Ono T."/>
            <person name="Yamada K."/>
            <person name="Fujii Y."/>
            <person name="Ozaki K."/>
            <person name="Hirao M."/>
            <person name="Ohmori Y."/>
            <person name="Kawabata A."/>
            <person name="Hikiji T."/>
            <person name="Kobatake N."/>
            <person name="Inagaki H."/>
            <person name="Ikema Y."/>
            <person name="Okamoto S."/>
            <person name="Okitani R."/>
            <person name="Kawakami T."/>
            <person name="Noguchi S."/>
            <person name="Itoh T."/>
            <person name="Shigeta K."/>
            <person name="Senba T."/>
            <person name="Matsumura K."/>
            <person name="Nakajima Y."/>
            <person name="Mizuno T."/>
            <person name="Morinaga M."/>
            <person name="Sasaki M."/>
            <person name="Togashi T."/>
            <person name="Oyama M."/>
            <person name="Hata H."/>
            <person name="Watanabe M."/>
            <person name="Komatsu T."/>
            <person name="Mizushima-Sugano J."/>
            <person name="Satoh T."/>
            <person name="Shirai Y."/>
            <person name="Takahashi Y."/>
            <person name="Nakagawa K."/>
            <person name="Okumura K."/>
            <person name="Nagase T."/>
            <person name="Nomura N."/>
            <person name="Kikuchi H."/>
            <person name="Masuho Y."/>
            <person name="Yamashita R."/>
            <person name="Nakai K."/>
            <person name="Yada T."/>
            <person name="Nakamura Y."/>
            <person name="Ohara O."/>
            <person name="Isogai T."/>
            <person name="Sugano S."/>
        </authorList>
    </citation>
    <scope>NUCLEOTIDE SEQUENCE [LARGE SCALE MRNA] (ISOFORM 2)</scope>
    <scope>VARIANTS LEU-163 AND PHE-361</scope>
    <source>
        <tissue>Thymus</tissue>
    </source>
</reference>
<reference key="4">
    <citation type="journal article" date="2006" name="Nature">
        <title>Human chromosome 11 DNA sequence and analysis including novel gene identification.</title>
        <authorList>
            <person name="Taylor T.D."/>
            <person name="Noguchi H."/>
            <person name="Totoki Y."/>
            <person name="Toyoda A."/>
            <person name="Kuroki Y."/>
            <person name="Dewar K."/>
            <person name="Lloyd C."/>
            <person name="Itoh T."/>
            <person name="Takeda T."/>
            <person name="Kim D.-W."/>
            <person name="She X."/>
            <person name="Barlow K.F."/>
            <person name="Bloom T."/>
            <person name="Bruford E."/>
            <person name="Chang J.L."/>
            <person name="Cuomo C.A."/>
            <person name="Eichler E."/>
            <person name="FitzGerald M.G."/>
            <person name="Jaffe D.B."/>
            <person name="LaButti K."/>
            <person name="Nicol R."/>
            <person name="Park H.-S."/>
            <person name="Seaman C."/>
            <person name="Sougnez C."/>
            <person name="Yang X."/>
            <person name="Zimmer A.R."/>
            <person name="Zody M.C."/>
            <person name="Birren B.W."/>
            <person name="Nusbaum C."/>
            <person name="Fujiyama A."/>
            <person name="Hattori M."/>
            <person name="Rogers J."/>
            <person name="Lander E.S."/>
            <person name="Sakaki Y."/>
        </authorList>
    </citation>
    <scope>NUCLEOTIDE SEQUENCE [LARGE SCALE GENOMIC DNA]</scope>
</reference>
<reference key="5">
    <citation type="journal article" date="2002" name="FEBS Lett.">
        <title>Functional screening of five PYPAF family members identifies PYPAF5 as a novel regulator of NF-kappaB and caspase-1.</title>
        <authorList>
            <person name="Grenier J.M."/>
            <person name="Wang L."/>
            <person name="Manji G.A."/>
            <person name="Huang W.-J."/>
            <person name="Al-Garawi A."/>
            <person name="Kelly R."/>
            <person name="Carlson A."/>
            <person name="Merriam S."/>
            <person name="Lora J.M."/>
            <person name="Briskin M."/>
            <person name="DiStefano P.S."/>
            <person name="Bertin J."/>
        </authorList>
    </citation>
    <scope>FUNCTION</scope>
    <scope>INVOLVEMENT IN INFLAMMASOME COMPLEX</scope>
    <scope>SUBCELLULAR LOCATION</scope>
    <scope>TISSUE SPECIFICITY</scope>
</reference>
<reference key="6">
    <citation type="journal article" date="2011" name="Am. J. Physiol.">
        <title>Developmental control of the Nlrp6 inflammasome and a substrate, IL-18, in mammalian intestine.</title>
        <authorList>
            <person name="Kempster S.L."/>
            <person name="Belteki G."/>
            <person name="Forhead A.J."/>
            <person name="Fowden A.L."/>
            <person name="Catalano R.D."/>
            <person name="Lam B.Y."/>
            <person name="McFarlane I."/>
            <person name="Charnock-Jones D.S."/>
            <person name="Smith G.C."/>
        </authorList>
    </citation>
    <scope>INDUCTION BY ROSIGLITAZONE</scope>
</reference>
<reference key="7">
    <citation type="journal article" date="2011" name="Proc. Natl. Acad. Sci. U.S.A.">
        <title>Nod-like receptor pyrin domain-containing protein 6 (NLRP6) controls epithelial self-renewal and colorectal carcinogenesis upon injury.</title>
        <authorList>
            <person name="Normand S."/>
            <person name="Delanoye-Crespin A."/>
            <person name="Bressenot A."/>
            <person name="Huot L."/>
            <person name="Grandjean T."/>
            <person name="Peyrin-Biroulet L."/>
            <person name="Lemoine Y."/>
            <person name="Hot D."/>
            <person name="Chamaillard M."/>
        </authorList>
    </citation>
    <scope>TISSUE SPECIFICITY</scope>
</reference>
<reference key="8">
    <citation type="journal article" date="2013" name="Gastroenterology">
        <title>Stress-induced corticotropin-releasing hormone-mediated NLRP6 inflammasome inhibition and transmissible enteritis in mice.</title>
        <authorList>
            <person name="Sun Y."/>
            <person name="Zhang M."/>
            <person name="Chen C.C."/>
            <person name="Gillilland M. III"/>
            <person name="Sun X."/>
            <person name="El-Zaatari M."/>
            <person name="Huffnagle G.B."/>
            <person name="Young V.B."/>
            <person name="Zhang J."/>
            <person name="Hong S.C."/>
            <person name="Chang Y.M."/>
            <person name="Gumucio D.L."/>
            <person name="Owyang C."/>
            <person name="Kao J.Y."/>
        </authorList>
    </citation>
    <scope>INDUCTION BY CRH AND ROSIGLITAZONE</scope>
</reference>
<reference key="9">
    <citation type="journal article" date="2018" name="Cell">
        <title>The NLRP6 inflammasome recognizes lipoteichoic acid and regulates Gram-positive pathogen infection.</title>
        <authorList>
            <person name="Hara H."/>
            <person name="Seregin S.S."/>
            <person name="Yang D."/>
            <person name="Fukase K."/>
            <person name="Chamaillard M."/>
            <person name="Alnemri E.S."/>
            <person name="Inohara N."/>
            <person name="Chen G.Y."/>
            <person name="Nunez G."/>
        </authorList>
    </citation>
    <scope>FUNCTION</scope>
</reference>
<reference key="10">
    <citation type="journal article" date="2020" name="Sci. Rep.">
        <title>NLRP6 self-assembles into a linear molecular platform following LPS binding and ATP stimulation.</title>
        <authorList>
            <person name="Leng F."/>
            <person name="Yin H."/>
            <person name="Qin S."/>
            <person name="Zhang K."/>
            <person name="Guan Y."/>
            <person name="Fang R."/>
            <person name="Wang H."/>
            <person name="Li G."/>
            <person name="Jiang Z."/>
            <person name="Sun F."/>
            <person name="Wang D.C."/>
            <person name="Xie C."/>
        </authorList>
    </citation>
    <scope>FUNCTION</scope>
    <scope>SUBUNIT</scope>
    <scope>SUBCELLULAR LOCATION</scope>
</reference>
<reference key="11">
    <citation type="journal article" date="2021" name="Cell">
        <title>Phase separation drives RNA virus-induced activation of the NLRP6 inflammasome.</title>
        <authorList>
            <person name="Shen C."/>
            <person name="Li R."/>
            <person name="Negro R."/>
            <person name="Cheng J."/>
            <person name="Vora S.M."/>
            <person name="Fu T.M."/>
            <person name="Wang A."/>
            <person name="He K."/>
            <person name="Andreeva L."/>
            <person name="Gao P."/>
            <person name="Tian Z."/>
            <person name="Flavell R.A."/>
            <person name="Zhu S."/>
            <person name="Wu H."/>
        </authorList>
    </citation>
    <scope>FUNCTION</scope>
    <scope>SUBCELLULAR LOCATION</scope>
    <scope>DOMAIN</scope>
    <scope>INTERACTION WITH PYCARD</scope>
    <scope>MUTAGENESIS OF 352-LYS--LYS-356</scope>
</reference>
<reference key="12">
    <citation type="journal article" date="2021" name="Cell Rep.">
        <title>DHX15 is required to control RNA virus-induced intestinal inflammation.</title>
        <authorList>
            <person name="Xing J."/>
            <person name="Zhou X."/>
            <person name="Fang M."/>
            <person name="Zhang E."/>
            <person name="Minze L.J."/>
            <person name="Zhang Z."/>
        </authorList>
    </citation>
    <scope>FUNCTION</scope>
    <scope>INTERACTION WITH DHX15</scope>
</reference>
<reference key="13">
    <citation type="journal article" date="2021" name="Int. Endod. J.">
        <title>NLRP6-caspase 4 inflammasome activation in response to cariogenic bacterial lipoteichoic acid in human dental pulp inflammation.</title>
        <authorList>
            <person name="Tian X.X."/>
            <person name="Li R."/>
            <person name="Liu C."/>
            <person name="Liu F."/>
            <person name="Yang L.J."/>
            <person name="Wang S.P."/>
            <person name="Wang C.L."/>
        </authorList>
    </citation>
    <scope>FUNCTION</scope>
</reference>
<reference evidence="27 28" key="14">
    <citation type="journal article" date="2019" name="Proc. Natl. Acad. Sci. U.S.A.">
        <title>Molecular mechanism for NLRP6 inflammasome assembly and activation.</title>
        <authorList>
            <person name="Shen C."/>
            <person name="Lu A."/>
            <person name="Xie W.J."/>
            <person name="Ruan J."/>
            <person name="Negro R."/>
            <person name="Egelman E.H."/>
            <person name="Fu T.M."/>
            <person name="Wu H."/>
        </authorList>
    </citation>
    <scope>X-RAY CRYSTALLOGRAPHY (2.27 ANGSTROMS) OF 14-106</scope>
    <scope>FUNCTION</scope>
    <scope>SUBCELLULAR LOCATION</scope>
    <scope>SUBUNIT</scope>
    <scope>MUTAGENESIS OF LEU-21; LEU-23; 27-GLU-GLU-28; HIS-39; ARG-42; TRP-53; PHE-71 AND ARG-87</scope>
</reference>
<reference key="15">
    <citation type="journal article" date="2015" name="Orphanet J. Rare Dis.">
        <title>EPS8L2 is a new causal gene for childhood onset autosomal recessive progressive hearing loss.</title>
        <authorList>
            <person name="Dahmani M."/>
            <person name="Ammar-Khodja F."/>
            <person name="Bonnet C."/>
            <person name="Lefevre G.M."/>
            <person name="Hardelin J.P."/>
            <person name="Ibrahim H."/>
            <person name="Mallek Z."/>
            <person name="Petit C."/>
        </authorList>
    </citation>
    <scope>VARIANT VAL-713</scope>
</reference>
<feature type="chain" id="PRO_0000080892" description="NACHT, LRR and PYD domains-containing protein 6">
    <location>
        <begin position="1"/>
        <end position="892"/>
    </location>
</feature>
<feature type="domain" description="Pyrin" evidence="4">
    <location>
        <begin position="1"/>
        <end position="103"/>
    </location>
</feature>
<feature type="domain" description="NACHT" evidence="5">
    <location>
        <begin position="196"/>
        <end position="513"/>
    </location>
</feature>
<feature type="repeat" description="LRR 1" evidence="3">
    <location>
        <begin position="462"/>
        <end position="487"/>
    </location>
</feature>
<feature type="repeat" description="LRR 2" evidence="3">
    <location>
        <begin position="727"/>
        <end position="747"/>
    </location>
</feature>
<feature type="repeat" description="LRR 3" evidence="3">
    <location>
        <begin position="755"/>
        <end position="778"/>
    </location>
</feature>
<feature type="repeat" description="LRR 4" evidence="3">
    <location>
        <begin position="811"/>
        <end position="834"/>
    </location>
</feature>
<feature type="repeat" description="LRR 5" evidence="3">
    <location>
        <begin position="845"/>
        <end position="868"/>
    </location>
</feature>
<feature type="region of interest" description="Disordered" evidence="6">
    <location>
        <begin position="158"/>
        <end position="181"/>
    </location>
</feature>
<feature type="region of interest" description="Disordered" evidence="20">
    <location>
        <begin position="352"/>
        <end position="356"/>
    </location>
</feature>
<feature type="region of interest" description="Disordered" evidence="6">
    <location>
        <begin position="590"/>
        <end position="614"/>
    </location>
</feature>
<feature type="compositionally biased region" description="Basic and acidic residues" evidence="6">
    <location>
        <begin position="170"/>
        <end position="181"/>
    </location>
</feature>
<feature type="compositionally biased region" description="Acidic residues" evidence="6">
    <location>
        <begin position="602"/>
        <end position="614"/>
    </location>
</feature>
<feature type="binding site" evidence="5">
    <location>
        <begin position="202"/>
        <end position="209"/>
    </location>
    <ligand>
        <name>ATP</name>
        <dbReference type="ChEBI" id="CHEBI:30616"/>
    </ligand>
</feature>
<feature type="splice variant" id="VSP_054400" description="In isoform 2." evidence="23">
    <location>
        <position position="702"/>
    </location>
</feature>
<feature type="sequence variant" id="VAR_058968" description="In dbSNP:rs6421985." evidence="7 9 10">
    <original>M</original>
    <variation>L</variation>
    <location>
        <position position="163"/>
    </location>
</feature>
<feature type="sequence variant" id="VAR_058969" description="In dbSNP:rs7482965." evidence="7 9 10">
    <original>Y</original>
    <variation>F</variation>
    <location>
        <position position="361"/>
    </location>
</feature>
<feature type="sequence variant" id="VAR_079497" description="In dbSNP:rs966612159." evidence="14">
    <original>A</original>
    <variation>V</variation>
    <location>
        <position position="713"/>
    </location>
</feature>
<feature type="mutagenesis site" description="Decreased formation of an inflammasome filament." evidence="16">
    <original>L</original>
    <variation>R</variation>
    <location>
        <position position="21"/>
    </location>
</feature>
<feature type="mutagenesis site" description="Decreased formation of an inflammasome filament. Decreased ability to promote PYCARD/ASC polymerization." evidence="16">
    <original>L</original>
    <variation>R</variation>
    <location>
        <position position="23"/>
    </location>
</feature>
<feature type="mutagenesis site" description="Abolished formation of an inflammasome filament." evidence="16">
    <original>EE</original>
    <variation>RR</variation>
    <location>
        <begin position="27"/>
        <end position="28"/>
    </location>
</feature>
<feature type="mutagenesis site" description="Decreased formation of an inflammasome filament. Abolished ability to promote PYCARD/ASC polymerization." evidence="16">
    <original>H</original>
    <variation>R</variation>
    <location>
        <position position="39"/>
    </location>
</feature>
<feature type="mutagenesis site" description="Abolished formation of an inflammasome filament." evidence="16">
    <original>R</original>
    <variation>E</variation>
    <location>
        <position position="42"/>
    </location>
</feature>
<feature type="mutagenesis site" description="Abolished formation of an inflammasome filament." evidence="16">
    <original>W</original>
    <variation>E</variation>
    <location>
        <position position="53"/>
    </location>
</feature>
<feature type="mutagenesis site" description="Does not affect formation of an inflammasome filament." evidence="16">
    <original>W</original>
    <variation>F</variation>
    <location>
        <position position="53"/>
    </location>
</feature>
<feature type="mutagenesis site" description="Does not prevent formation of an inflammasome filament." evidence="16">
    <original>F</original>
    <variation>R</variation>
    <location>
        <position position="71"/>
    </location>
</feature>
<feature type="mutagenesis site" description="Does not prevent formation of an inflammasome filament." evidence="16">
    <original>R</original>
    <variation>D</variation>
    <location>
        <position position="87"/>
    </location>
</feature>
<feature type="mutagenesis site" description="Impaired formation of liquid-liquid phase separation (LLPS)." evidence="20">
    <original>KDKKK</original>
    <variation>ADAAA</variation>
    <location>
        <begin position="352"/>
        <end position="356"/>
    </location>
</feature>
<feature type="helix" evidence="29">
    <location>
        <begin position="14"/>
        <end position="27"/>
    </location>
</feature>
<feature type="helix" evidence="29">
    <location>
        <begin position="31"/>
        <end position="41"/>
    </location>
</feature>
<feature type="helix" evidence="29">
    <location>
        <begin position="46"/>
        <end position="48"/>
    </location>
</feature>
<feature type="helix" evidence="29">
    <location>
        <begin position="56"/>
        <end position="58"/>
    </location>
</feature>
<feature type="helix" evidence="29">
    <location>
        <begin position="61"/>
        <end position="72"/>
    </location>
</feature>
<feature type="helix" evidence="29">
    <location>
        <begin position="74"/>
        <end position="85"/>
    </location>
</feature>
<dbReference type="EMBL" id="AF479748">
    <property type="protein sequence ID" value="AAL87105.1"/>
    <property type="molecule type" value="mRNA"/>
</dbReference>
<dbReference type="EMBL" id="AY154461">
    <property type="protein sequence ID" value="AAO18157.1"/>
    <property type="molecule type" value="mRNA"/>
</dbReference>
<dbReference type="EMBL" id="AK292668">
    <property type="protein sequence ID" value="BAF85357.1"/>
    <property type="molecule type" value="mRNA"/>
</dbReference>
<dbReference type="EMBL" id="AC136475">
    <property type="status" value="NOT_ANNOTATED_CDS"/>
    <property type="molecule type" value="mRNA"/>
</dbReference>
<dbReference type="CCDS" id="CCDS60680.1">
    <molecule id="P59044-2"/>
</dbReference>
<dbReference type="CCDS" id="CCDS7693.1">
    <molecule id="P59044-1"/>
</dbReference>
<dbReference type="RefSeq" id="NP_001263629.1">
    <molecule id="P59044-2"/>
    <property type="nucleotide sequence ID" value="NM_001276700.2"/>
</dbReference>
<dbReference type="RefSeq" id="NP_612202.2">
    <molecule id="P59044-1"/>
    <property type="nucleotide sequence ID" value="NM_138329.2"/>
</dbReference>
<dbReference type="PDB" id="6NCV">
    <property type="method" value="EM"/>
    <property type="resolution" value="3.70 A"/>
    <property type="chains" value="A/B/C/D/E/F/G/H/I/J/K/L/M/N/O/P/Q/R/S/T/V=1-106"/>
</dbReference>
<dbReference type="PDB" id="6NDJ">
    <property type="method" value="X-ray"/>
    <property type="resolution" value="2.27 A"/>
    <property type="chains" value="A/B=14-106"/>
</dbReference>
<dbReference type="PDBsum" id="6NCV"/>
<dbReference type="PDBsum" id="6NDJ"/>
<dbReference type="EMDB" id="EMD-0438"/>
<dbReference type="SMR" id="P59044"/>
<dbReference type="BioGRID" id="128114">
    <property type="interactions" value="14"/>
</dbReference>
<dbReference type="CORUM" id="P59044"/>
<dbReference type="FunCoup" id="P59044">
    <property type="interactions" value="185"/>
</dbReference>
<dbReference type="STRING" id="9606.ENSP00000309767"/>
<dbReference type="iPTMnet" id="P59044"/>
<dbReference type="PhosphoSitePlus" id="P59044"/>
<dbReference type="BioMuta" id="NLRP6"/>
<dbReference type="DMDM" id="259016285"/>
<dbReference type="MassIVE" id="P59044"/>
<dbReference type="PaxDb" id="9606-ENSP00000309767"/>
<dbReference type="PeptideAtlas" id="P59044"/>
<dbReference type="ProteomicsDB" id="21300"/>
<dbReference type="ProteomicsDB" id="57113">
    <molecule id="P59044-1"/>
</dbReference>
<dbReference type="Antibodypedia" id="58845">
    <property type="antibodies" value="209 antibodies from 30 providers"/>
</dbReference>
<dbReference type="DNASU" id="171389"/>
<dbReference type="Ensembl" id="ENST00000312165.5">
    <molecule id="P59044-1"/>
    <property type="protein sequence ID" value="ENSP00000309767.4"/>
    <property type="gene ID" value="ENSG00000174885.13"/>
</dbReference>
<dbReference type="Ensembl" id="ENST00000534750.6">
    <molecule id="P59044-2"/>
    <property type="protein sequence ID" value="ENSP00000433617.1"/>
    <property type="gene ID" value="ENSG00000174885.13"/>
</dbReference>
<dbReference type="GeneID" id="171389"/>
<dbReference type="KEGG" id="hsa:171389"/>
<dbReference type="MANE-Select" id="ENST00000534750.6">
    <molecule id="P59044-2"/>
    <property type="protein sequence ID" value="ENSP00000433617.1"/>
    <property type="RefSeq nucleotide sequence ID" value="NM_001276700.2"/>
    <property type="RefSeq protein sequence ID" value="NP_001263629.1"/>
</dbReference>
<dbReference type="UCSC" id="uc010qvs.4">
    <molecule id="P59044-1"/>
    <property type="organism name" value="human"/>
</dbReference>
<dbReference type="AGR" id="HGNC:22944"/>
<dbReference type="CTD" id="171389"/>
<dbReference type="DisGeNET" id="171389"/>
<dbReference type="GeneCards" id="NLRP6"/>
<dbReference type="HGNC" id="HGNC:22944">
    <property type="gene designation" value="NLRP6"/>
</dbReference>
<dbReference type="HPA" id="ENSG00000174885">
    <property type="expression patterns" value="Tissue enriched (intestine)"/>
</dbReference>
<dbReference type="MIM" id="609650">
    <property type="type" value="gene"/>
</dbReference>
<dbReference type="neXtProt" id="NX_P59044"/>
<dbReference type="OpenTargets" id="ENSG00000174885"/>
<dbReference type="PharmGKB" id="PA162398002"/>
<dbReference type="VEuPathDB" id="HostDB:ENSG00000174885"/>
<dbReference type="eggNOG" id="ENOG502SANB">
    <property type="taxonomic scope" value="Eukaryota"/>
</dbReference>
<dbReference type="GeneTree" id="ENSGT00940000162758"/>
<dbReference type="HOGENOM" id="CLU_002274_2_2_1"/>
<dbReference type="InParanoid" id="P59044"/>
<dbReference type="OMA" id="QFMDQSF"/>
<dbReference type="OrthoDB" id="120976at2759"/>
<dbReference type="PAN-GO" id="P59044">
    <property type="GO annotations" value="7 GO annotations based on evolutionary models"/>
</dbReference>
<dbReference type="PhylomeDB" id="P59044"/>
<dbReference type="PathwayCommons" id="P59044"/>
<dbReference type="BioGRID-ORCS" id="171389">
    <property type="hits" value="8 hits in 1150 CRISPR screens"/>
</dbReference>
<dbReference type="GeneWiki" id="NLRP6"/>
<dbReference type="GenomeRNAi" id="171389"/>
<dbReference type="Pharos" id="P59044">
    <property type="development level" value="Tbio"/>
</dbReference>
<dbReference type="PRO" id="PR:P59044"/>
<dbReference type="Proteomes" id="UP000005640">
    <property type="component" value="Chromosome 11"/>
</dbReference>
<dbReference type="RNAct" id="P59044">
    <property type="molecule type" value="protein"/>
</dbReference>
<dbReference type="Bgee" id="ENSG00000174885">
    <property type="expression patterns" value="Expressed in small intestine Peyer's patch and 75 other cell types or tissues"/>
</dbReference>
<dbReference type="GO" id="GO:0061702">
    <property type="term" value="C:canonical inflammasome complex"/>
    <property type="evidence" value="ECO:0000318"/>
    <property type="project" value="GO_Central"/>
</dbReference>
<dbReference type="GO" id="GO:0005737">
    <property type="term" value="C:cytoplasm"/>
    <property type="evidence" value="ECO:0000318"/>
    <property type="project" value="GO_Central"/>
</dbReference>
<dbReference type="GO" id="GO:0005829">
    <property type="term" value="C:cytosol"/>
    <property type="evidence" value="ECO:0000314"/>
    <property type="project" value="UniProtKB"/>
</dbReference>
<dbReference type="GO" id="GO:0043232">
    <property type="term" value="C:intracellular membraneless organelle"/>
    <property type="evidence" value="ECO:0000314"/>
    <property type="project" value="UniProt"/>
</dbReference>
<dbReference type="GO" id="GO:0043228">
    <property type="term" value="C:membraneless organelle"/>
    <property type="evidence" value="ECO:0000314"/>
    <property type="project" value="UniProtKB"/>
</dbReference>
<dbReference type="GO" id="GO:0140738">
    <property type="term" value="C:NLRP6 inflammasome complex"/>
    <property type="evidence" value="ECO:0000314"/>
    <property type="project" value="UniProtKB"/>
</dbReference>
<dbReference type="GO" id="GO:0031965">
    <property type="term" value="C:nuclear membrane"/>
    <property type="evidence" value="ECO:0007669"/>
    <property type="project" value="UniProtKB-SubCell"/>
</dbReference>
<dbReference type="GO" id="GO:0005886">
    <property type="term" value="C:plasma membrane"/>
    <property type="evidence" value="ECO:0007669"/>
    <property type="project" value="UniProtKB-SubCell"/>
</dbReference>
<dbReference type="GO" id="GO:0005524">
    <property type="term" value="F:ATP binding"/>
    <property type="evidence" value="ECO:0007669"/>
    <property type="project" value="UniProtKB-KW"/>
</dbReference>
<dbReference type="GO" id="GO:0003725">
    <property type="term" value="F:double-stranded RNA binding"/>
    <property type="evidence" value="ECO:0000314"/>
    <property type="project" value="UniProtKB"/>
</dbReference>
<dbReference type="GO" id="GO:0001530">
    <property type="term" value="F:lipopolysaccharide binding"/>
    <property type="evidence" value="ECO:0000314"/>
    <property type="project" value="UniProtKB"/>
</dbReference>
<dbReference type="GO" id="GO:0070891">
    <property type="term" value="F:lipoteichoic acid binding"/>
    <property type="evidence" value="ECO:0000314"/>
    <property type="project" value="UniProtKB"/>
</dbReference>
<dbReference type="GO" id="GO:0140693">
    <property type="term" value="F:molecular condensate scaffold activity"/>
    <property type="evidence" value="ECO:0000314"/>
    <property type="project" value="UniProtKB"/>
</dbReference>
<dbReference type="GO" id="GO:0038187">
    <property type="term" value="F:pattern recognition receptor activity"/>
    <property type="evidence" value="ECO:0000314"/>
    <property type="project" value="UniProtKB"/>
</dbReference>
<dbReference type="GO" id="GO:0042277">
    <property type="term" value="F:peptide binding"/>
    <property type="evidence" value="ECO:0000318"/>
    <property type="project" value="GO_Central"/>
</dbReference>
<dbReference type="GO" id="GO:0035591">
    <property type="term" value="F:signaling adaptor activity"/>
    <property type="evidence" value="ECO:0000314"/>
    <property type="project" value="UniProt"/>
</dbReference>
<dbReference type="GO" id="GO:0005000">
    <property type="term" value="F:vasopressin receptor activity"/>
    <property type="evidence" value="ECO:0000250"/>
    <property type="project" value="UniProtKB"/>
</dbReference>
<dbReference type="GO" id="GO:0002526">
    <property type="term" value="P:acute inflammatory response"/>
    <property type="evidence" value="ECO:0000318"/>
    <property type="project" value="GO_Central"/>
</dbReference>
<dbReference type="GO" id="GO:0002438">
    <property type="term" value="P:acute inflammatory response to antigenic stimulus"/>
    <property type="evidence" value="ECO:0007669"/>
    <property type="project" value="Ensembl"/>
</dbReference>
<dbReference type="GO" id="GO:0140374">
    <property type="term" value="P:antiviral innate immune response"/>
    <property type="evidence" value="ECO:0000314"/>
    <property type="project" value="UniProtKB"/>
</dbReference>
<dbReference type="GO" id="GO:0050830">
    <property type="term" value="P:defense response to Gram-positive bacterium"/>
    <property type="evidence" value="ECO:0000314"/>
    <property type="project" value="UniProtKB"/>
</dbReference>
<dbReference type="GO" id="GO:0051607">
    <property type="term" value="P:defense response to virus"/>
    <property type="evidence" value="ECO:0000314"/>
    <property type="project" value="UniProtKB"/>
</dbReference>
<dbReference type="GO" id="GO:0048874">
    <property type="term" value="P:host-mediated regulation of intestinal microbiota composition"/>
    <property type="evidence" value="ECO:0007669"/>
    <property type="project" value="Ensembl"/>
</dbReference>
<dbReference type="GO" id="GO:0070266">
    <property type="term" value="P:necroptotic process"/>
    <property type="evidence" value="ECO:0007669"/>
    <property type="project" value="Ensembl"/>
</dbReference>
<dbReference type="GO" id="GO:0043124">
    <property type="term" value="P:negative regulation of canonical NF-kappaB signal transduction"/>
    <property type="evidence" value="ECO:0007669"/>
    <property type="project" value="Ensembl"/>
</dbReference>
<dbReference type="GO" id="GO:0070373">
    <property type="term" value="P:negative regulation of ERK1 and ERK2 cascade"/>
    <property type="evidence" value="ECO:0007669"/>
    <property type="project" value="Ensembl"/>
</dbReference>
<dbReference type="GO" id="GO:0002862">
    <property type="term" value="P:negative regulation of inflammatory response to antigenic stimulus"/>
    <property type="evidence" value="ECO:0007669"/>
    <property type="project" value="Ensembl"/>
</dbReference>
<dbReference type="GO" id="GO:0034122">
    <property type="term" value="P:negative regulation of toll-like receptor signaling pathway"/>
    <property type="evidence" value="ECO:0007669"/>
    <property type="project" value="Ensembl"/>
</dbReference>
<dbReference type="GO" id="GO:0032689">
    <property type="term" value="P:negative regulation of type II interferon production"/>
    <property type="evidence" value="ECO:0007669"/>
    <property type="project" value="Ensembl"/>
</dbReference>
<dbReference type="GO" id="GO:0070946">
    <property type="term" value="P:neutrophil-mediated killing of gram-positive bacterium"/>
    <property type="evidence" value="ECO:0007669"/>
    <property type="project" value="Ensembl"/>
</dbReference>
<dbReference type="GO" id="GO:0140739">
    <property type="term" value="P:NLRP6 inflammasome complex assembly"/>
    <property type="evidence" value="ECO:0000314"/>
    <property type="project" value="UniProtKB"/>
</dbReference>
<dbReference type="GO" id="GO:0050729">
    <property type="term" value="P:positive regulation of inflammatory response"/>
    <property type="evidence" value="ECO:0000314"/>
    <property type="project" value="UniProtKB"/>
</dbReference>
<dbReference type="GO" id="GO:2000494">
    <property type="term" value="P:positive regulation of interleukin-18-mediated signaling pathway"/>
    <property type="evidence" value="ECO:0000314"/>
    <property type="project" value="UniProtKB"/>
</dbReference>
<dbReference type="GO" id="GO:0051260">
    <property type="term" value="P:protein homooligomerization"/>
    <property type="evidence" value="ECO:0000314"/>
    <property type="project" value="UniProtKB"/>
</dbReference>
<dbReference type="GO" id="GO:0070269">
    <property type="term" value="P:pyroptotic inflammatory response"/>
    <property type="evidence" value="ECO:0007669"/>
    <property type="project" value="Ensembl"/>
</dbReference>
<dbReference type="GO" id="GO:0010506">
    <property type="term" value="P:regulation of autophagy"/>
    <property type="evidence" value="ECO:0007669"/>
    <property type="project" value="Ensembl"/>
</dbReference>
<dbReference type="GO" id="GO:0050727">
    <property type="term" value="P:regulation of inflammatory response"/>
    <property type="evidence" value="ECO:0000250"/>
    <property type="project" value="UniProtKB"/>
</dbReference>
<dbReference type="GO" id="GO:0070255">
    <property type="term" value="P:regulation of mucus secretion"/>
    <property type="evidence" value="ECO:0007669"/>
    <property type="project" value="Ensembl"/>
</dbReference>
<dbReference type="GO" id="GO:0042060">
    <property type="term" value="P:wound healing"/>
    <property type="evidence" value="ECO:0007669"/>
    <property type="project" value="Ensembl"/>
</dbReference>
<dbReference type="CDD" id="cd08321">
    <property type="entry name" value="Pyrin_ASC-like"/>
    <property type="match status" value="1"/>
</dbReference>
<dbReference type="FunFam" id="1.10.533.10:FF:000069">
    <property type="entry name" value="NACHT, LRR and PYD domains-containing protein 6"/>
    <property type="match status" value="1"/>
</dbReference>
<dbReference type="FunFam" id="3.40.50.300:FF:001349">
    <property type="entry name" value="NLR family pyrin domain containing 6"/>
    <property type="match status" value="1"/>
</dbReference>
<dbReference type="Gene3D" id="1.10.533.10">
    <property type="entry name" value="Death Domain, Fas"/>
    <property type="match status" value="1"/>
</dbReference>
<dbReference type="Gene3D" id="3.40.50.300">
    <property type="entry name" value="P-loop containing nucleotide triphosphate hydrolases"/>
    <property type="match status" value="1"/>
</dbReference>
<dbReference type="Gene3D" id="3.80.10.10">
    <property type="entry name" value="Ribonuclease Inhibitor"/>
    <property type="match status" value="1"/>
</dbReference>
<dbReference type="InterPro" id="IPR004020">
    <property type="entry name" value="DAPIN"/>
</dbReference>
<dbReference type="InterPro" id="IPR011029">
    <property type="entry name" value="DEATH-like_dom_sf"/>
</dbReference>
<dbReference type="InterPro" id="IPR032675">
    <property type="entry name" value="LRR_dom_sf"/>
</dbReference>
<dbReference type="InterPro" id="IPR007111">
    <property type="entry name" value="NACHT_NTPase"/>
</dbReference>
<dbReference type="InterPro" id="IPR041267">
    <property type="entry name" value="NLRP_HD2"/>
</dbReference>
<dbReference type="InterPro" id="IPR050637">
    <property type="entry name" value="NLRP_innate_immun_reg"/>
</dbReference>
<dbReference type="InterPro" id="IPR041075">
    <property type="entry name" value="NOD1/2_WH"/>
</dbReference>
<dbReference type="InterPro" id="IPR027417">
    <property type="entry name" value="P-loop_NTPase"/>
</dbReference>
<dbReference type="PANTHER" id="PTHR45690">
    <property type="entry name" value="NACHT, LRR AND PYD DOMAINS-CONTAINING PROTEIN 12"/>
    <property type="match status" value="1"/>
</dbReference>
<dbReference type="PANTHER" id="PTHR45690:SF19">
    <property type="entry name" value="NACHT, LRR AND PYD DOMAINS-CONTAINING PROTEIN 3"/>
    <property type="match status" value="1"/>
</dbReference>
<dbReference type="Pfam" id="PF05729">
    <property type="entry name" value="NACHT"/>
    <property type="match status" value="1"/>
</dbReference>
<dbReference type="Pfam" id="PF17776">
    <property type="entry name" value="NLRC4_HD2"/>
    <property type="match status" value="1"/>
</dbReference>
<dbReference type="Pfam" id="PF17779">
    <property type="entry name" value="NOD2_WH"/>
    <property type="match status" value="1"/>
</dbReference>
<dbReference type="Pfam" id="PF02758">
    <property type="entry name" value="PYRIN"/>
    <property type="match status" value="1"/>
</dbReference>
<dbReference type="SMART" id="SM00368">
    <property type="entry name" value="LRR_RI"/>
    <property type="match status" value="3"/>
</dbReference>
<dbReference type="SMART" id="SM01289">
    <property type="entry name" value="PYRIN"/>
    <property type="match status" value="1"/>
</dbReference>
<dbReference type="SUPFAM" id="SSF47986">
    <property type="entry name" value="DEATH domain"/>
    <property type="match status" value="1"/>
</dbReference>
<dbReference type="SUPFAM" id="SSF52540">
    <property type="entry name" value="P-loop containing nucleoside triphosphate hydrolases"/>
    <property type="match status" value="1"/>
</dbReference>
<dbReference type="SUPFAM" id="SSF52047">
    <property type="entry name" value="RNI-like"/>
    <property type="match status" value="1"/>
</dbReference>
<dbReference type="PROSITE" id="PS50824">
    <property type="entry name" value="DAPIN"/>
    <property type="match status" value="1"/>
</dbReference>
<dbReference type="PROSITE" id="PS50837">
    <property type="entry name" value="NACHT"/>
    <property type="match status" value="1"/>
</dbReference>